<gene>
    <name type="primary">BUD31</name>
</gene>
<comment type="function">
    <text evidence="1">Involved in the pre-mRNA splicing process. May play a role as regulator of AR transcriptional activity; may increase AR transcriptional activity.</text>
</comment>
<comment type="subunit">
    <text evidence="1">Identified in the spliceosome C complex. May interact with AR.</text>
</comment>
<comment type="subcellular location">
    <subcellularLocation>
        <location evidence="1">Nucleus</location>
    </subcellularLocation>
    <text evidence="1">Detected in chromatin at the promoter of AR target genes.</text>
</comment>
<comment type="domain">
    <text evidence="1">Contains a short sequence motif (Phe-Xaa-Xaa-Phe-Tyr) that can bind to AR and may modulate AR activity.</text>
</comment>
<comment type="similarity">
    <text evidence="3">Belongs to the BUD31 (G10) family.</text>
</comment>
<accession>Q2NKU3</accession>
<accession>A5PJG0</accession>
<proteinExistence type="evidence at transcript level"/>
<reference key="1">
    <citation type="submission" date="2007-06" db="EMBL/GenBank/DDBJ databases">
        <authorList>
            <consortium name="NIH - Mammalian Gene Collection (MGC) project"/>
        </authorList>
    </citation>
    <scope>NUCLEOTIDE SEQUENCE [LARGE SCALE MRNA]</scope>
    <source>
        <strain>Hereford</strain>
        <tissue>Heart ventricle</tissue>
        <tissue>Testis</tissue>
    </source>
</reference>
<keyword id="KW-0007">Acetylation</keyword>
<keyword id="KW-0507">mRNA processing</keyword>
<keyword id="KW-0508">mRNA splicing</keyword>
<keyword id="KW-0539">Nucleus</keyword>
<keyword id="KW-1185">Reference proteome</keyword>
<keyword id="KW-0747">Spliceosome</keyword>
<name>BUD31_BOVIN</name>
<evidence type="ECO:0000250" key="1">
    <source>
        <dbReference type="UniProtKB" id="P41223"/>
    </source>
</evidence>
<evidence type="ECO:0000255" key="2"/>
<evidence type="ECO:0000305" key="3"/>
<dbReference type="EMBL" id="BC111638">
    <property type="protein sequence ID" value="AAI11639.1"/>
    <property type="molecule type" value="mRNA"/>
</dbReference>
<dbReference type="EMBL" id="BC142096">
    <property type="protein sequence ID" value="AAI42097.1"/>
    <property type="molecule type" value="mRNA"/>
</dbReference>
<dbReference type="RefSeq" id="NP_001039829.1">
    <property type="nucleotide sequence ID" value="NM_001046364.2"/>
</dbReference>
<dbReference type="RefSeq" id="XP_005225221.1">
    <property type="nucleotide sequence ID" value="XM_005225164.1"/>
</dbReference>
<dbReference type="RefSeq" id="XP_005225222.1">
    <property type="nucleotide sequence ID" value="XM_005225165.5"/>
</dbReference>
<dbReference type="RefSeq" id="XP_005225223.1">
    <property type="nucleotide sequence ID" value="XM_005225166.5"/>
</dbReference>
<dbReference type="RefSeq" id="XP_005225224.1">
    <property type="nucleotide sequence ID" value="XM_005225167.5"/>
</dbReference>
<dbReference type="RefSeq" id="XP_005225225.1">
    <property type="nucleotide sequence ID" value="XM_005225168.5"/>
</dbReference>
<dbReference type="RefSeq" id="XP_015315969.1">
    <property type="nucleotide sequence ID" value="XM_015460483.3"/>
</dbReference>
<dbReference type="SMR" id="Q2NKU3"/>
<dbReference type="FunCoup" id="Q2NKU3">
    <property type="interactions" value="4323"/>
</dbReference>
<dbReference type="STRING" id="9913.ENSBTAP00000061709"/>
<dbReference type="PaxDb" id="9913-ENSBTAP00000036979"/>
<dbReference type="Ensembl" id="ENSBTAT00000080736.1">
    <property type="protein sequence ID" value="ENSBTAP00000061709.1"/>
    <property type="gene ID" value="ENSBTAG00000020439.7"/>
</dbReference>
<dbReference type="GeneID" id="533977"/>
<dbReference type="KEGG" id="bta:533977"/>
<dbReference type="CTD" id="8896"/>
<dbReference type="VEuPathDB" id="HostDB:ENSBTAG00000020439"/>
<dbReference type="VGNC" id="VGNC:26609">
    <property type="gene designation" value="BUD31"/>
</dbReference>
<dbReference type="eggNOG" id="KOG3404">
    <property type="taxonomic scope" value="Eukaryota"/>
</dbReference>
<dbReference type="GeneTree" id="ENSGT00390000014300"/>
<dbReference type="HOGENOM" id="CLU_087132_1_1_1"/>
<dbReference type="InParanoid" id="Q2NKU3"/>
<dbReference type="OMA" id="FGTSCIC"/>
<dbReference type="OrthoDB" id="277109at2759"/>
<dbReference type="TreeFam" id="TF105609"/>
<dbReference type="Reactome" id="R-BTA-72163">
    <property type="pathway name" value="mRNA Splicing - Major Pathway"/>
</dbReference>
<dbReference type="Proteomes" id="UP000009136">
    <property type="component" value="Chromosome 25"/>
</dbReference>
<dbReference type="Bgee" id="ENSBTAG00000020439">
    <property type="expression patterns" value="Expressed in oocyte and 106 other cell types or tissues"/>
</dbReference>
<dbReference type="GO" id="GO:0000785">
    <property type="term" value="C:chromatin"/>
    <property type="evidence" value="ECO:0000250"/>
    <property type="project" value="UniProtKB"/>
</dbReference>
<dbReference type="GO" id="GO:0005681">
    <property type="term" value="C:spliceosomal complex"/>
    <property type="evidence" value="ECO:0000318"/>
    <property type="project" value="GO_Central"/>
</dbReference>
<dbReference type="GO" id="GO:0016922">
    <property type="term" value="F:nuclear receptor binding"/>
    <property type="evidence" value="ECO:0000250"/>
    <property type="project" value="UniProtKB"/>
</dbReference>
<dbReference type="GO" id="GO:0003713">
    <property type="term" value="F:transcription coactivator activity"/>
    <property type="evidence" value="ECO:0000250"/>
    <property type="project" value="UniProtKB"/>
</dbReference>
<dbReference type="GO" id="GO:0000398">
    <property type="term" value="P:mRNA splicing, via spliceosome"/>
    <property type="evidence" value="ECO:0000318"/>
    <property type="project" value="GO_Central"/>
</dbReference>
<dbReference type="InterPro" id="IPR001748">
    <property type="entry name" value="BUD31"/>
</dbReference>
<dbReference type="InterPro" id="IPR018230">
    <property type="entry name" value="BUD31/G10-rel_CS"/>
</dbReference>
<dbReference type="PANTHER" id="PTHR19411:SF0">
    <property type="entry name" value="PROTEIN BUD31 HOMOLOG"/>
    <property type="match status" value="1"/>
</dbReference>
<dbReference type="PANTHER" id="PTHR19411">
    <property type="entry name" value="PROTEIN BUD31-RELATED"/>
    <property type="match status" value="1"/>
</dbReference>
<dbReference type="Pfam" id="PF01125">
    <property type="entry name" value="BUD31"/>
    <property type="match status" value="1"/>
</dbReference>
<dbReference type="PRINTS" id="PR00322">
    <property type="entry name" value="G10"/>
</dbReference>
<dbReference type="PROSITE" id="PS00997">
    <property type="entry name" value="G10_1"/>
    <property type="match status" value="1"/>
</dbReference>
<dbReference type="PROSITE" id="PS00998">
    <property type="entry name" value="G10_2"/>
    <property type="match status" value="1"/>
</dbReference>
<protein>
    <recommendedName>
        <fullName>Protein BUD31 homolog</fullName>
    </recommendedName>
    <alternativeName>
        <fullName>Protein G10 homolog</fullName>
    </alternativeName>
</protein>
<feature type="chain" id="PRO_0000249854" description="Protein BUD31 homolog">
    <location>
        <begin position="1"/>
        <end position="144"/>
    </location>
</feature>
<feature type="region of interest" description="Interaction with AR" evidence="1">
    <location>
        <begin position="59"/>
        <end position="67"/>
    </location>
</feature>
<feature type="short sequence motif" description="Nuclear localization signal" evidence="2">
    <location>
        <begin position="2"/>
        <end position="10"/>
    </location>
</feature>
<feature type="modified residue" description="N6-acetyllysine" evidence="1">
    <location>
        <position position="125"/>
    </location>
</feature>
<organism>
    <name type="scientific">Bos taurus</name>
    <name type="common">Bovine</name>
    <dbReference type="NCBI Taxonomy" id="9913"/>
    <lineage>
        <taxon>Eukaryota</taxon>
        <taxon>Metazoa</taxon>
        <taxon>Chordata</taxon>
        <taxon>Craniata</taxon>
        <taxon>Vertebrata</taxon>
        <taxon>Euteleostomi</taxon>
        <taxon>Mammalia</taxon>
        <taxon>Eutheria</taxon>
        <taxon>Laurasiatheria</taxon>
        <taxon>Artiodactyla</taxon>
        <taxon>Ruminantia</taxon>
        <taxon>Pecora</taxon>
        <taxon>Bovidae</taxon>
        <taxon>Bovinae</taxon>
        <taxon>Bos</taxon>
    </lineage>
</organism>
<sequence length="144" mass="17000">MPKVKRSRKAPPDGWELIEPTLDELDQKMREAETEPHEGKRKVESLWPIFRIHHQKTRYIFDLFYKRKAISRELYEYCIKEGYADKNLIAKWKKQGYENLCCLRCIQTRDTNFGTNCICRVPKSKLEVGRIIECTHCGCRGCSG</sequence>